<evidence type="ECO:0000256" key="1">
    <source>
        <dbReference type="SAM" id="MobiDB-lite"/>
    </source>
</evidence>
<evidence type="ECO:0000305" key="2"/>
<protein>
    <recommendedName>
        <fullName>Transcriptional regulator SyrB</fullName>
    </recommendedName>
</protein>
<geneLocation type="plasmid">
    <name>pSymA</name>
    <name>megaplasmid 1</name>
</geneLocation>
<accession>O33685</accession>
<sequence>MADESNTGPVAAAVAADAEVKVPTAKKLRSPRPQKAAAEPAQPKAPAAKPRRYSEQERNDKLKLIETQVSEGNTLKNAIQSAGISEQTYYHWKGAAKPVGKKDAKSTKPLPAGDEFADLVKLEEENQKLRKRLAEKLRTENAELRKRLGLD</sequence>
<gene>
    <name type="primary">syrB</name>
    <name type="ordered locus">RA0933</name>
    <name type="ORF">SMa1698</name>
</gene>
<reference key="1">
    <citation type="journal article" date="1997" name="Mol. Plant Microbe Interact.">
        <title>Identification and characterization of a gene on Rhizobium meliloti pSyma, syrB, that negatively affects syrM expression.</title>
        <authorList>
            <person name="Barnett M.J."/>
            <person name="Long S.R."/>
        </authorList>
    </citation>
    <scope>NUCLEOTIDE SEQUENCE [GENOMIC DNA]</scope>
    <source>
        <strain>1021</strain>
    </source>
</reference>
<reference key="2">
    <citation type="journal article" date="2001" name="Proc. Natl. Acad. Sci. U.S.A.">
        <title>Nucleotide sequence and predicted functions of the entire Sinorhizobium meliloti pSymA megaplasmid.</title>
        <authorList>
            <person name="Barnett M.J."/>
            <person name="Fisher R.F."/>
            <person name="Jones T."/>
            <person name="Komp C."/>
            <person name="Abola A.P."/>
            <person name="Barloy-Hubler F."/>
            <person name="Bowser L."/>
            <person name="Capela D."/>
            <person name="Galibert F."/>
            <person name="Gouzy J."/>
            <person name="Gurjal M."/>
            <person name="Hong A."/>
            <person name="Huizar L."/>
            <person name="Hyman R.W."/>
            <person name="Kahn D."/>
            <person name="Kahn M.L."/>
            <person name="Kalman S."/>
            <person name="Keating D.H."/>
            <person name="Palm C."/>
            <person name="Peck M.C."/>
            <person name="Surzycki R."/>
            <person name="Wells D.H."/>
            <person name="Yeh K.-C."/>
            <person name="Davis R.W."/>
            <person name="Federspiel N.A."/>
            <person name="Long S.R."/>
        </authorList>
    </citation>
    <scope>NUCLEOTIDE SEQUENCE [LARGE SCALE GENOMIC DNA]</scope>
    <source>
        <strain>1021</strain>
    </source>
</reference>
<reference key="3">
    <citation type="journal article" date="2001" name="Science">
        <title>The composite genome of the legume symbiont Sinorhizobium meliloti.</title>
        <authorList>
            <person name="Galibert F."/>
            <person name="Finan T.M."/>
            <person name="Long S.R."/>
            <person name="Puehler A."/>
            <person name="Abola P."/>
            <person name="Ampe F."/>
            <person name="Barloy-Hubler F."/>
            <person name="Barnett M.J."/>
            <person name="Becker A."/>
            <person name="Boistard P."/>
            <person name="Bothe G."/>
            <person name="Boutry M."/>
            <person name="Bowser L."/>
            <person name="Buhrmester J."/>
            <person name="Cadieu E."/>
            <person name="Capela D."/>
            <person name="Chain P."/>
            <person name="Cowie A."/>
            <person name="Davis R.W."/>
            <person name="Dreano S."/>
            <person name="Federspiel N.A."/>
            <person name="Fisher R.F."/>
            <person name="Gloux S."/>
            <person name="Godrie T."/>
            <person name="Goffeau A."/>
            <person name="Golding B."/>
            <person name="Gouzy J."/>
            <person name="Gurjal M."/>
            <person name="Hernandez-Lucas I."/>
            <person name="Hong A."/>
            <person name="Huizar L."/>
            <person name="Hyman R.W."/>
            <person name="Jones T."/>
            <person name="Kahn D."/>
            <person name="Kahn M.L."/>
            <person name="Kalman S."/>
            <person name="Keating D.H."/>
            <person name="Kiss E."/>
            <person name="Komp C."/>
            <person name="Lelaure V."/>
            <person name="Masuy D."/>
            <person name="Palm C."/>
            <person name="Peck M.C."/>
            <person name="Pohl T.M."/>
            <person name="Portetelle D."/>
            <person name="Purnelle B."/>
            <person name="Ramsperger U."/>
            <person name="Surzycki R."/>
            <person name="Thebault P."/>
            <person name="Vandenbol M."/>
            <person name="Vorhoelter F.J."/>
            <person name="Weidner S."/>
            <person name="Wells D.H."/>
            <person name="Wong K."/>
            <person name="Yeh K.-C."/>
            <person name="Batut J."/>
        </authorList>
    </citation>
    <scope>NUCLEOTIDE SEQUENCE [LARGE SCALE GENOMIC DNA]</scope>
    <source>
        <strain>1021</strain>
    </source>
</reference>
<organism>
    <name type="scientific">Rhizobium meliloti (strain 1021)</name>
    <name type="common">Ensifer meliloti</name>
    <name type="synonym">Sinorhizobium meliloti</name>
    <dbReference type="NCBI Taxonomy" id="266834"/>
    <lineage>
        <taxon>Bacteria</taxon>
        <taxon>Pseudomonadati</taxon>
        <taxon>Pseudomonadota</taxon>
        <taxon>Alphaproteobacteria</taxon>
        <taxon>Hyphomicrobiales</taxon>
        <taxon>Rhizobiaceae</taxon>
        <taxon>Sinorhizobium/Ensifer group</taxon>
        <taxon>Sinorhizobium</taxon>
    </lineage>
</organism>
<dbReference type="EMBL" id="U90220">
    <property type="protein sequence ID" value="AAB63674.1"/>
    <property type="molecule type" value="Genomic_DNA"/>
</dbReference>
<dbReference type="EMBL" id="AE006469">
    <property type="protein sequence ID" value="AAK65591.1"/>
    <property type="molecule type" value="Genomic_DNA"/>
</dbReference>
<dbReference type="PIR" id="E95378">
    <property type="entry name" value="E95378"/>
</dbReference>
<dbReference type="RefSeq" id="NP_436179.1">
    <property type="nucleotide sequence ID" value="NC_003037.1"/>
</dbReference>
<dbReference type="RefSeq" id="WP_010967898.1">
    <property type="nucleotide sequence ID" value="NC_003037.1"/>
</dbReference>
<dbReference type="SMR" id="O33685"/>
<dbReference type="EnsemblBacteria" id="AAK65591">
    <property type="protein sequence ID" value="AAK65591"/>
    <property type="gene ID" value="SMa1698"/>
</dbReference>
<dbReference type="KEGG" id="sme:SMa1698"/>
<dbReference type="HOGENOM" id="CLU_106261_2_0_5"/>
<dbReference type="OrthoDB" id="8453701at2"/>
<dbReference type="Proteomes" id="UP000001976">
    <property type="component" value="Plasmid pSymA"/>
</dbReference>
<dbReference type="GO" id="GO:0003677">
    <property type="term" value="F:DNA binding"/>
    <property type="evidence" value="ECO:0007669"/>
    <property type="project" value="InterPro"/>
</dbReference>
<dbReference type="GO" id="GO:0004803">
    <property type="term" value="F:transposase activity"/>
    <property type="evidence" value="ECO:0007669"/>
    <property type="project" value="InterPro"/>
</dbReference>
<dbReference type="GO" id="GO:0006313">
    <property type="term" value="P:DNA transposition"/>
    <property type="evidence" value="ECO:0007669"/>
    <property type="project" value="InterPro"/>
</dbReference>
<dbReference type="InterPro" id="IPR009057">
    <property type="entry name" value="Homeodomain-like_sf"/>
</dbReference>
<dbReference type="InterPro" id="IPR002514">
    <property type="entry name" value="Transposase_8"/>
</dbReference>
<dbReference type="Pfam" id="PF01527">
    <property type="entry name" value="HTH_Tnp_1"/>
    <property type="match status" value="1"/>
</dbReference>
<dbReference type="SUPFAM" id="SSF46689">
    <property type="entry name" value="Homeodomain-like"/>
    <property type="match status" value="1"/>
</dbReference>
<proteinExistence type="inferred from homology"/>
<name>SYRB1_RHIME</name>
<feature type="chain" id="PRO_0000072392" description="Transcriptional regulator SyrB">
    <location>
        <begin position="1"/>
        <end position="151"/>
    </location>
</feature>
<feature type="region of interest" description="Disordered" evidence="1">
    <location>
        <begin position="1"/>
        <end position="61"/>
    </location>
</feature>
<feature type="compositionally biased region" description="Low complexity" evidence="1">
    <location>
        <begin position="33"/>
        <end position="48"/>
    </location>
</feature>
<feature type="compositionally biased region" description="Basic and acidic residues" evidence="1">
    <location>
        <begin position="52"/>
        <end position="61"/>
    </location>
</feature>
<keyword id="KW-0536">Nodulation</keyword>
<keyword id="KW-0614">Plasmid</keyword>
<keyword id="KW-1185">Reference proteome</keyword>
<keyword id="KW-0678">Repressor</keyword>
<keyword id="KW-0804">Transcription</keyword>
<keyword id="KW-0805">Transcription regulation</keyword>
<comment type="function">
    <text>Responsible for the repression of SyrM activity.</text>
</comment>
<comment type="similarity">
    <text evidence="2">Belongs to the SyrB family.</text>
</comment>